<accession>Q8FBI1</accession>
<keyword id="KW-0224">Dipeptidase</keyword>
<keyword id="KW-0378">Hydrolase</keyword>
<keyword id="KW-0464">Manganese</keyword>
<keyword id="KW-0479">Metal-binding</keyword>
<keyword id="KW-0482">Metalloprotease</keyword>
<keyword id="KW-0645">Protease</keyword>
<keyword id="KW-1185">Reference proteome</keyword>
<sequence length="443" mass="50189">MESLASLYKNHIATLQERTRDALARFKLDALLIHSGELFNVFLDDHPYPFKVNPQFKAWVPVTQVPNCWLLVDGVNKPKLWFYLPVDYWHNVEPLPNSFWTEDVEVIALPKADGIGSLLPAARGNIGYIGPVPERALQLGIEASNINPKGVIDYLHYYRSFKTEYELACMREAQKMAVNGHRAAEEAFRSGMSEFDINIAYLTATGHRDTDVPYSNIVALNEHAAVLHYTKLDHQAPEEMRSFLLDAGAEYNGYAADLTRTWSAKSDNDYAQLVKDVNDEQLALIATMKAGVSYVDYHIQFHQRIAKLLRKHQIITDMSEEAMVENDLTGPFMPHGIGHPLGLQVHDVAGFMQDDSGTHLAAPAKYPYLRCTRILQPGMVLTIEPGIYFIESLLAPWREGQFSKHFNWQKIEALKPFGGIRIEDNVVIHENNVENMTRDLKLA</sequence>
<feature type="chain" id="PRO_0000303844" description="Xaa-Pro dipeptidase">
    <location>
        <begin position="1"/>
        <end position="443"/>
    </location>
</feature>
<feature type="binding site" evidence="1">
    <location>
        <position position="246"/>
    </location>
    <ligand>
        <name>Mn(2+)</name>
        <dbReference type="ChEBI" id="CHEBI:29035"/>
        <label>2</label>
    </ligand>
</feature>
<feature type="binding site" evidence="1">
    <location>
        <position position="257"/>
    </location>
    <ligand>
        <name>Mn(2+)</name>
        <dbReference type="ChEBI" id="CHEBI:29035"/>
        <label>1</label>
    </ligand>
</feature>
<feature type="binding site" evidence="1">
    <location>
        <position position="257"/>
    </location>
    <ligand>
        <name>Mn(2+)</name>
        <dbReference type="ChEBI" id="CHEBI:29035"/>
        <label>2</label>
    </ligand>
</feature>
<feature type="binding site" evidence="1">
    <location>
        <position position="339"/>
    </location>
    <ligand>
        <name>Mn(2+)</name>
        <dbReference type="ChEBI" id="CHEBI:29035"/>
        <label>1</label>
    </ligand>
</feature>
<feature type="binding site" evidence="1">
    <location>
        <position position="384"/>
    </location>
    <ligand>
        <name>Mn(2+)</name>
        <dbReference type="ChEBI" id="CHEBI:29035"/>
        <label>1</label>
    </ligand>
</feature>
<feature type="binding site" evidence="1">
    <location>
        <position position="423"/>
    </location>
    <ligand>
        <name>Mn(2+)</name>
        <dbReference type="ChEBI" id="CHEBI:29035"/>
        <label>1</label>
    </ligand>
</feature>
<feature type="binding site" evidence="1">
    <location>
        <position position="423"/>
    </location>
    <ligand>
        <name>Mn(2+)</name>
        <dbReference type="ChEBI" id="CHEBI:29035"/>
        <label>2</label>
    </ligand>
</feature>
<proteinExistence type="inferred from homology"/>
<organism>
    <name type="scientific">Escherichia coli O6:H1 (strain CFT073 / ATCC 700928 / UPEC)</name>
    <dbReference type="NCBI Taxonomy" id="199310"/>
    <lineage>
        <taxon>Bacteria</taxon>
        <taxon>Pseudomonadati</taxon>
        <taxon>Pseudomonadota</taxon>
        <taxon>Gammaproteobacteria</taxon>
        <taxon>Enterobacterales</taxon>
        <taxon>Enterobacteriaceae</taxon>
        <taxon>Escherichia</taxon>
    </lineage>
</organism>
<reference key="1">
    <citation type="journal article" date="2002" name="Proc. Natl. Acad. Sci. U.S.A.">
        <title>Extensive mosaic structure revealed by the complete genome sequence of uropathogenic Escherichia coli.</title>
        <authorList>
            <person name="Welch R.A."/>
            <person name="Burland V."/>
            <person name="Plunkett G. III"/>
            <person name="Redford P."/>
            <person name="Roesch P."/>
            <person name="Rasko D."/>
            <person name="Buckles E.L."/>
            <person name="Liou S.-R."/>
            <person name="Boutin A."/>
            <person name="Hackett J."/>
            <person name="Stroud D."/>
            <person name="Mayhew G.F."/>
            <person name="Rose D.J."/>
            <person name="Zhou S."/>
            <person name="Schwartz D.C."/>
            <person name="Perna N.T."/>
            <person name="Mobley H.L.T."/>
            <person name="Donnenberg M.S."/>
            <person name="Blattner F.R."/>
        </authorList>
    </citation>
    <scope>NUCLEOTIDE SEQUENCE [LARGE SCALE GENOMIC DNA]</scope>
    <source>
        <strain>CFT073 / ATCC 700928 / UPEC</strain>
    </source>
</reference>
<comment type="function">
    <text evidence="1">Splits dipeptides with a prolyl residue in the C-terminal position.</text>
</comment>
<comment type="catalytic activity">
    <reaction evidence="1">
        <text>Xaa-L-Pro dipeptide + H2O = an L-alpha-amino acid + L-proline</text>
        <dbReference type="Rhea" id="RHEA:76407"/>
        <dbReference type="ChEBI" id="CHEBI:15377"/>
        <dbReference type="ChEBI" id="CHEBI:59869"/>
        <dbReference type="ChEBI" id="CHEBI:60039"/>
        <dbReference type="ChEBI" id="CHEBI:195196"/>
        <dbReference type="EC" id="3.4.13.9"/>
    </reaction>
</comment>
<comment type="cofactor">
    <cofactor evidence="1">
        <name>Mn(2+)</name>
        <dbReference type="ChEBI" id="CHEBI:29035"/>
    </cofactor>
    <text evidence="1">Binds 2 manganese ions per subunit.</text>
</comment>
<comment type="similarity">
    <text evidence="1">Belongs to the peptidase M24B family. Bacterial-type prolidase subfamily.</text>
</comment>
<gene>
    <name evidence="1" type="primary">pepQ</name>
    <name type="ordered locus">c4794</name>
</gene>
<protein>
    <recommendedName>
        <fullName evidence="1">Xaa-Pro dipeptidase</fullName>
        <shortName evidence="1">X-Pro dipeptidase</shortName>
        <ecNumber evidence="1">3.4.13.9</ecNumber>
    </recommendedName>
    <alternativeName>
        <fullName evidence="1">Imidodipeptidase</fullName>
    </alternativeName>
    <alternativeName>
        <fullName evidence="1">Proline dipeptidase</fullName>
        <shortName evidence="1">Prolidase</shortName>
    </alternativeName>
</protein>
<evidence type="ECO:0000255" key="1">
    <source>
        <dbReference type="HAMAP-Rule" id="MF_01279"/>
    </source>
</evidence>
<name>PEPQ_ECOL6</name>
<dbReference type="EC" id="3.4.13.9" evidence="1"/>
<dbReference type="EMBL" id="AE014075">
    <property type="protein sequence ID" value="AAN83227.1"/>
    <property type="molecule type" value="Genomic_DNA"/>
</dbReference>
<dbReference type="RefSeq" id="WP_000444545.1">
    <property type="nucleotide sequence ID" value="NZ_CP051263.1"/>
</dbReference>
<dbReference type="SMR" id="Q8FBI1"/>
<dbReference type="STRING" id="199310.c4794"/>
<dbReference type="MEROPS" id="M24.003"/>
<dbReference type="KEGG" id="ecc:c4794"/>
<dbReference type="eggNOG" id="COG0006">
    <property type="taxonomic scope" value="Bacteria"/>
</dbReference>
<dbReference type="HOGENOM" id="CLU_050675_0_0_6"/>
<dbReference type="BioCyc" id="ECOL199310:C4794-MONOMER"/>
<dbReference type="Proteomes" id="UP000001410">
    <property type="component" value="Chromosome"/>
</dbReference>
<dbReference type="GO" id="GO:0005829">
    <property type="term" value="C:cytosol"/>
    <property type="evidence" value="ECO:0007669"/>
    <property type="project" value="TreeGrafter"/>
</dbReference>
<dbReference type="GO" id="GO:0004177">
    <property type="term" value="F:aminopeptidase activity"/>
    <property type="evidence" value="ECO:0007669"/>
    <property type="project" value="TreeGrafter"/>
</dbReference>
<dbReference type="GO" id="GO:0046872">
    <property type="term" value="F:metal ion binding"/>
    <property type="evidence" value="ECO:0007669"/>
    <property type="project" value="UniProtKB-KW"/>
</dbReference>
<dbReference type="GO" id="GO:0008235">
    <property type="term" value="F:metalloexopeptidase activity"/>
    <property type="evidence" value="ECO:0007669"/>
    <property type="project" value="UniProtKB-UniRule"/>
</dbReference>
<dbReference type="GO" id="GO:0016795">
    <property type="term" value="F:phosphoric triester hydrolase activity"/>
    <property type="evidence" value="ECO:0007669"/>
    <property type="project" value="InterPro"/>
</dbReference>
<dbReference type="GO" id="GO:0102009">
    <property type="term" value="F:proline dipeptidase activity"/>
    <property type="evidence" value="ECO:0007669"/>
    <property type="project" value="UniProtKB-EC"/>
</dbReference>
<dbReference type="GO" id="GO:0006508">
    <property type="term" value="P:proteolysis"/>
    <property type="evidence" value="ECO:0007669"/>
    <property type="project" value="UniProtKB-KW"/>
</dbReference>
<dbReference type="CDD" id="cd01087">
    <property type="entry name" value="Prolidase"/>
    <property type="match status" value="1"/>
</dbReference>
<dbReference type="FunFam" id="3.40.350.10:FF:000002">
    <property type="entry name" value="Xaa-Pro dipeptidase"/>
    <property type="match status" value="1"/>
</dbReference>
<dbReference type="FunFam" id="3.90.230.10:FF:000006">
    <property type="entry name" value="Xaa-Pro dipeptidase"/>
    <property type="match status" value="1"/>
</dbReference>
<dbReference type="Gene3D" id="3.90.230.10">
    <property type="entry name" value="Creatinase/methionine aminopeptidase superfamily"/>
    <property type="match status" value="1"/>
</dbReference>
<dbReference type="Gene3D" id="3.40.350.10">
    <property type="entry name" value="Creatinase/prolidase N-terminal domain"/>
    <property type="match status" value="1"/>
</dbReference>
<dbReference type="HAMAP" id="MF_01279">
    <property type="entry name" value="X_Pro_dipeptid"/>
    <property type="match status" value="1"/>
</dbReference>
<dbReference type="InterPro" id="IPR029149">
    <property type="entry name" value="Creatin/AminoP/Spt16_N"/>
</dbReference>
<dbReference type="InterPro" id="IPR036005">
    <property type="entry name" value="Creatinase/aminopeptidase-like"/>
</dbReference>
<dbReference type="InterPro" id="IPR048819">
    <property type="entry name" value="PepQ_N"/>
</dbReference>
<dbReference type="InterPro" id="IPR000994">
    <property type="entry name" value="Pept_M24"/>
</dbReference>
<dbReference type="InterPro" id="IPR001131">
    <property type="entry name" value="Peptidase_M24B_aminopep-P_CS"/>
</dbReference>
<dbReference type="InterPro" id="IPR052433">
    <property type="entry name" value="X-Pro_dipept-like"/>
</dbReference>
<dbReference type="InterPro" id="IPR022846">
    <property type="entry name" value="X_Pro_dipept"/>
</dbReference>
<dbReference type="NCBIfam" id="NF010133">
    <property type="entry name" value="PRK13607.1"/>
    <property type="match status" value="1"/>
</dbReference>
<dbReference type="PANTHER" id="PTHR43226">
    <property type="entry name" value="XAA-PRO AMINOPEPTIDASE 3"/>
    <property type="match status" value="1"/>
</dbReference>
<dbReference type="PANTHER" id="PTHR43226:SF8">
    <property type="entry name" value="XAA-PRO DIPEPTIDASE"/>
    <property type="match status" value="1"/>
</dbReference>
<dbReference type="Pfam" id="PF21216">
    <property type="entry name" value="PepQ_N"/>
    <property type="match status" value="1"/>
</dbReference>
<dbReference type="Pfam" id="PF00557">
    <property type="entry name" value="Peptidase_M24"/>
    <property type="match status" value="1"/>
</dbReference>
<dbReference type="SUPFAM" id="SSF55920">
    <property type="entry name" value="Creatinase/aminopeptidase"/>
    <property type="match status" value="1"/>
</dbReference>
<dbReference type="PROSITE" id="PS00491">
    <property type="entry name" value="PROLINE_PEPTIDASE"/>
    <property type="match status" value="1"/>
</dbReference>